<proteinExistence type="inferred from homology"/>
<accession>A3CWZ8</accession>
<feature type="chain" id="PRO_1000002200" description="DNA-binding protein Memar_1972">
    <location>
        <begin position="1"/>
        <end position="112"/>
    </location>
</feature>
<feature type="region of interest" description="Disordered" evidence="2">
    <location>
        <begin position="14"/>
        <end position="35"/>
    </location>
</feature>
<sequence length="112" mass="13190">MVDDELAELRRRRMEQMQRQAMDQQGMEEEAARQQQIDAQVRAALMEILEPEARERLNTIKLTRPEFAKAVEQQLVMLAQSGRVRQRITDEQLKALLAQLTPSKKEFRITRK</sequence>
<protein>
    <recommendedName>
        <fullName evidence="1">DNA-binding protein Memar_1972</fullName>
    </recommendedName>
</protein>
<reference key="1">
    <citation type="journal article" date="2009" name="Stand. Genomic Sci.">
        <title>Complete genome sequence of Methanoculleus marisnigri Romesser et al. 1981 type strain JR1.</title>
        <authorList>
            <person name="Anderson I.J."/>
            <person name="Sieprawska-Lupa M."/>
            <person name="Lapidus A."/>
            <person name="Nolan M."/>
            <person name="Copeland A."/>
            <person name="Glavina Del Rio T."/>
            <person name="Tice H."/>
            <person name="Dalin E."/>
            <person name="Barry K."/>
            <person name="Saunders E."/>
            <person name="Han C."/>
            <person name="Brettin T."/>
            <person name="Detter J.C."/>
            <person name="Bruce D."/>
            <person name="Mikhailova N."/>
            <person name="Pitluck S."/>
            <person name="Hauser L."/>
            <person name="Land M."/>
            <person name="Lucas S."/>
            <person name="Richardson P."/>
            <person name="Whitman W.B."/>
            <person name="Kyrpides N.C."/>
        </authorList>
    </citation>
    <scope>NUCLEOTIDE SEQUENCE [LARGE SCALE GENOMIC DNA]</scope>
    <source>
        <strain>ATCC 35101 / DSM 1498 / JR1</strain>
    </source>
</reference>
<comment type="similarity">
    <text evidence="1">Belongs to the PDCD5 family.</text>
</comment>
<gene>
    <name type="ordered locus">Memar_1972</name>
</gene>
<dbReference type="EMBL" id="CP000562">
    <property type="protein sequence ID" value="ABN57898.1"/>
    <property type="molecule type" value="Genomic_DNA"/>
</dbReference>
<dbReference type="RefSeq" id="WP_011844807.1">
    <property type="nucleotide sequence ID" value="NC_009051.1"/>
</dbReference>
<dbReference type="SMR" id="A3CWZ8"/>
<dbReference type="STRING" id="368407.Memar_1972"/>
<dbReference type="GeneID" id="4848415"/>
<dbReference type="KEGG" id="mem:Memar_1972"/>
<dbReference type="eggNOG" id="arCOG04179">
    <property type="taxonomic scope" value="Archaea"/>
</dbReference>
<dbReference type="HOGENOM" id="CLU_122978_3_0_2"/>
<dbReference type="OrthoDB" id="7912at2157"/>
<dbReference type="Proteomes" id="UP000002146">
    <property type="component" value="Chromosome"/>
</dbReference>
<dbReference type="GO" id="GO:0005829">
    <property type="term" value="C:cytosol"/>
    <property type="evidence" value="ECO:0007669"/>
    <property type="project" value="TreeGrafter"/>
</dbReference>
<dbReference type="GO" id="GO:0003677">
    <property type="term" value="F:DNA binding"/>
    <property type="evidence" value="ECO:0007669"/>
    <property type="project" value="UniProtKB-UniRule"/>
</dbReference>
<dbReference type="Gene3D" id="1.10.8.140">
    <property type="entry name" value="PDCD5-like"/>
    <property type="match status" value="1"/>
</dbReference>
<dbReference type="HAMAP" id="MF_00026">
    <property type="entry name" value="dsDNA_bind"/>
    <property type="match status" value="1"/>
</dbReference>
<dbReference type="InterPro" id="IPR022889">
    <property type="entry name" value="DNA_bind_arc"/>
</dbReference>
<dbReference type="InterPro" id="IPR002836">
    <property type="entry name" value="PDCD5-like"/>
</dbReference>
<dbReference type="InterPro" id="IPR036883">
    <property type="entry name" value="PDCD5-like_sf"/>
</dbReference>
<dbReference type="NCBIfam" id="NF003268">
    <property type="entry name" value="PRK04239.1"/>
    <property type="match status" value="1"/>
</dbReference>
<dbReference type="PANTHER" id="PTHR10840">
    <property type="entry name" value="PROGRAMMED CELL DEATH PROTEIN 5"/>
    <property type="match status" value="1"/>
</dbReference>
<dbReference type="PANTHER" id="PTHR10840:SF0">
    <property type="entry name" value="PROGRAMMED CELL DEATH PROTEIN 5"/>
    <property type="match status" value="1"/>
</dbReference>
<dbReference type="Pfam" id="PF01984">
    <property type="entry name" value="dsDNA_bind"/>
    <property type="match status" value="1"/>
</dbReference>
<dbReference type="PIRSF" id="PIRSF015730">
    <property type="entry name" value="TFAR19"/>
    <property type="match status" value="1"/>
</dbReference>
<dbReference type="SUPFAM" id="SSF46950">
    <property type="entry name" value="Double-stranded DNA-binding domain"/>
    <property type="match status" value="1"/>
</dbReference>
<name>Y1972_METMJ</name>
<evidence type="ECO:0000255" key="1">
    <source>
        <dbReference type="HAMAP-Rule" id="MF_00026"/>
    </source>
</evidence>
<evidence type="ECO:0000256" key="2">
    <source>
        <dbReference type="SAM" id="MobiDB-lite"/>
    </source>
</evidence>
<keyword id="KW-0238">DNA-binding</keyword>
<organism>
    <name type="scientific">Methanoculleus marisnigri (strain ATCC 35101 / DSM 1498 / JR1)</name>
    <dbReference type="NCBI Taxonomy" id="368407"/>
    <lineage>
        <taxon>Archaea</taxon>
        <taxon>Methanobacteriati</taxon>
        <taxon>Methanobacteriota</taxon>
        <taxon>Stenosarchaea group</taxon>
        <taxon>Methanomicrobia</taxon>
        <taxon>Methanomicrobiales</taxon>
        <taxon>Methanomicrobiaceae</taxon>
        <taxon>Methanoculleus</taxon>
    </lineage>
</organism>